<sequence length="540" mass="61441">MRLDTNSNVDFKAFESSSSSCPVKLDNLATWGGSQKTDTRLPITDYSNLGGPRHNRSPFPLCKDVNNRFVIWDGDMTTLEVDAITNTSDETLTESNSISERIFAVAGNQLREELSTTVKECRTGDVRITRGYNLPAKYVLHTVAPAYREKFKTAAENTLHCCYRNVLCKAKELNLHTIALCNISAHQKSFPADVAAHIALRTIRRYLDKCTLQVVILCVGSSERGTYEVLAPLYFPRDQLEERSALWQLPKDIGGEFGEPQHPDPDRQIRIIRNPQHSVHMRHHLADDDSDVSPHDMEGNSSDLEYGARDMNGLSLNSYSSGLQAQLQRDLDRQHLLSDRPRTGVYENVISEGVEGIEHQERYERLLRRAQVEDLTEVSGIGCLYQSGVDRLGRPVIVFCGKWFPAQNIDLEKALLYLIKLLDPIVKGDYVISYFHTLTSTNNYPSLHWLREVYSVLPYKYKKNLKAFYIVHPTFWTKMMTWWFTTFMAPAIKAKVHSLPGVEHLYSAITKDQLEIPAYITEYDMATNGLHYFNPVPTAS</sequence>
<proteinExistence type="evidence at transcript level"/>
<gene>
    <name evidence="4 6" type="primary">Gdap2</name>
    <name evidence="6" type="ORF">CG18812</name>
</gene>
<accession>Q7JUR6</accession>
<evidence type="ECO:0000255" key="1">
    <source>
        <dbReference type="PROSITE-ProRule" id="PRU00056"/>
    </source>
</evidence>
<evidence type="ECO:0000255" key="2">
    <source>
        <dbReference type="PROSITE-ProRule" id="PRU00490"/>
    </source>
</evidence>
<evidence type="ECO:0000269" key="3">
    <source>
    </source>
</evidence>
<evidence type="ECO:0000303" key="4">
    <source>
    </source>
</evidence>
<evidence type="ECO:0000305" key="5"/>
<evidence type="ECO:0000312" key="6">
    <source>
        <dbReference type="FlyBase" id="FBgn0042135"/>
    </source>
</evidence>
<organism>
    <name type="scientific">Drosophila melanogaster</name>
    <name type="common">Fruit fly</name>
    <dbReference type="NCBI Taxonomy" id="7227"/>
    <lineage>
        <taxon>Eukaryota</taxon>
        <taxon>Metazoa</taxon>
        <taxon>Ecdysozoa</taxon>
        <taxon>Arthropoda</taxon>
        <taxon>Hexapoda</taxon>
        <taxon>Insecta</taxon>
        <taxon>Pterygota</taxon>
        <taxon>Neoptera</taxon>
        <taxon>Endopterygota</taxon>
        <taxon>Diptera</taxon>
        <taxon>Brachycera</taxon>
        <taxon>Muscomorpha</taxon>
        <taxon>Ephydroidea</taxon>
        <taxon>Drosophilidae</taxon>
        <taxon>Drosophila</taxon>
        <taxon>Sophophora</taxon>
    </lineage>
</organism>
<dbReference type="EMBL" id="AE013599">
    <property type="protein sequence ID" value="AAG22308.2"/>
    <property type="molecule type" value="Genomic_DNA"/>
</dbReference>
<dbReference type="EMBL" id="AY122088">
    <property type="protein sequence ID" value="AAM52600.1"/>
    <property type="molecule type" value="mRNA"/>
</dbReference>
<dbReference type="RefSeq" id="NP_724597.1">
    <property type="nucleotide sequence ID" value="NM_165552.5"/>
</dbReference>
<dbReference type="SMR" id="Q7JUR6"/>
<dbReference type="BioGRID" id="72830">
    <property type="interactions" value="4"/>
</dbReference>
<dbReference type="FunCoup" id="Q7JUR6">
    <property type="interactions" value="1496"/>
</dbReference>
<dbReference type="IntAct" id="Q7JUR6">
    <property type="interactions" value="1"/>
</dbReference>
<dbReference type="STRING" id="7227.FBpp0088009"/>
<dbReference type="PaxDb" id="7227-FBpp0088009"/>
<dbReference type="DNASU" id="59173"/>
<dbReference type="EnsemblMetazoa" id="FBtr0088935">
    <property type="protein sequence ID" value="FBpp0088009"/>
    <property type="gene ID" value="FBgn0042135"/>
</dbReference>
<dbReference type="GeneID" id="59173"/>
<dbReference type="KEGG" id="dme:Dmel_CG18812"/>
<dbReference type="UCSC" id="CG18812-RC">
    <property type="organism name" value="d. melanogaster"/>
</dbReference>
<dbReference type="AGR" id="FB:FBgn0042135"/>
<dbReference type="CTD" id="54834"/>
<dbReference type="FlyBase" id="FBgn0042135">
    <property type="gene designation" value="Gdap2"/>
</dbReference>
<dbReference type="VEuPathDB" id="VectorBase:FBgn0042135"/>
<dbReference type="eggNOG" id="KOG2633">
    <property type="taxonomic scope" value="Eukaryota"/>
</dbReference>
<dbReference type="GeneTree" id="ENSGT00940000156336"/>
<dbReference type="InParanoid" id="Q7JUR6"/>
<dbReference type="OMA" id="IHPTFWT"/>
<dbReference type="OrthoDB" id="365077at2759"/>
<dbReference type="PhylomeDB" id="Q7JUR6"/>
<dbReference type="BioGRID-ORCS" id="59173">
    <property type="hits" value="0 hits in 1 CRISPR screen"/>
</dbReference>
<dbReference type="GenomeRNAi" id="59173"/>
<dbReference type="PRO" id="PR:Q7JUR6"/>
<dbReference type="Proteomes" id="UP000000803">
    <property type="component" value="Chromosome 2R"/>
</dbReference>
<dbReference type="Bgee" id="FBgn0042135">
    <property type="expression patterns" value="Expressed in adult Malpighian tubule principal cell of initial segment in Malpighian tubule and 287 other cell types or tissues"/>
</dbReference>
<dbReference type="ExpressionAtlas" id="Q7JUR6">
    <property type="expression patterns" value="baseline and differential"/>
</dbReference>
<dbReference type="GO" id="GO:0006979">
    <property type="term" value="P:response to oxidative stress"/>
    <property type="evidence" value="ECO:0000314"/>
    <property type="project" value="FlyBase"/>
</dbReference>
<dbReference type="GO" id="GO:0042594">
    <property type="term" value="P:response to starvation"/>
    <property type="evidence" value="ECO:0000314"/>
    <property type="project" value="FlyBase"/>
</dbReference>
<dbReference type="CDD" id="cd02905">
    <property type="entry name" value="Macro_GDAP2-like"/>
    <property type="match status" value="1"/>
</dbReference>
<dbReference type="CDD" id="cd00170">
    <property type="entry name" value="SEC14"/>
    <property type="match status" value="1"/>
</dbReference>
<dbReference type="Gene3D" id="3.40.525.10">
    <property type="entry name" value="CRAL-TRIO lipid binding domain"/>
    <property type="match status" value="1"/>
</dbReference>
<dbReference type="Gene3D" id="3.40.220.10">
    <property type="entry name" value="Leucine Aminopeptidase, subunit E, domain 1"/>
    <property type="match status" value="1"/>
</dbReference>
<dbReference type="InterPro" id="IPR001251">
    <property type="entry name" value="CRAL-TRIO_dom"/>
</dbReference>
<dbReference type="InterPro" id="IPR036865">
    <property type="entry name" value="CRAL-TRIO_dom_sf"/>
</dbReference>
<dbReference type="InterPro" id="IPR002589">
    <property type="entry name" value="Macro_dom"/>
</dbReference>
<dbReference type="InterPro" id="IPR043472">
    <property type="entry name" value="Macro_dom-like"/>
</dbReference>
<dbReference type="InterPro" id="IPR035793">
    <property type="entry name" value="Macro_GDAP2"/>
</dbReference>
<dbReference type="PANTHER" id="PTHR11106">
    <property type="entry name" value="GANGLIOSIDE INDUCED DIFFERENTIATION ASSOCIATED PROTEIN 2-RELATED"/>
    <property type="match status" value="1"/>
</dbReference>
<dbReference type="PANTHER" id="PTHR11106:SF72">
    <property type="entry name" value="GANGLIOSIDE-INDUCED DIFFERENTIATION-ASSOCIATED PROTEIN 2"/>
    <property type="match status" value="1"/>
</dbReference>
<dbReference type="Pfam" id="PF13716">
    <property type="entry name" value="CRAL_TRIO_2"/>
    <property type="match status" value="1"/>
</dbReference>
<dbReference type="Pfam" id="PF01661">
    <property type="entry name" value="Macro"/>
    <property type="match status" value="1"/>
</dbReference>
<dbReference type="SMART" id="SM00506">
    <property type="entry name" value="A1pp"/>
    <property type="match status" value="1"/>
</dbReference>
<dbReference type="SMART" id="SM00516">
    <property type="entry name" value="SEC14"/>
    <property type="match status" value="1"/>
</dbReference>
<dbReference type="SUPFAM" id="SSF52087">
    <property type="entry name" value="CRAL/TRIO domain"/>
    <property type="match status" value="1"/>
</dbReference>
<dbReference type="SUPFAM" id="SSF52949">
    <property type="entry name" value="Macro domain-like"/>
    <property type="match status" value="1"/>
</dbReference>
<dbReference type="PROSITE" id="PS50191">
    <property type="entry name" value="CRAL_TRIO"/>
    <property type="match status" value="1"/>
</dbReference>
<dbReference type="PROSITE" id="PS51154">
    <property type="entry name" value="MACRO"/>
    <property type="match status" value="1"/>
</dbReference>
<name>GDAP2_DROME</name>
<reference key="1">
    <citation type="journal article" date="2000" name="Science">
        <title>The genome sequence of Drosophila melanogaster.</title>
        <authorList>
            <person name="Adams M.D."/>
            <person name="Celniker S.E."/>
            <person name="Holt R.A."/>
            <person name="Evans C.A."/>
            <person name="Gocayne J.D."/>
            <person name="Amanatides P.G."/>
            <person name="Scherer S.E."/>
            <person name="Li P.W."/>
            <person name="Hoskins R.A."/>
            <person name="Galle R.F."/>
            <person name="George R.A."/>
            <person name="Lewis S.E."/>
            <person name="Richards S."/>
            <person name="Ashburner M."/>
            <person name="Henderson S.N."/>
            <person name="Sutton G.G."/>
            <person name="Wortman J.R."/>
            <person name="Yandell M.D."/>
            <person name="Zhang Q."/>
            <person name="Chen L.X."/>
            <person name="Brandon R.C."/>
            <person name="Rogers Y.-H.C."/>
            <person name="Blazej R.G."/>
            <person name="Champe M."/>
            <person name="Pfeiffer B.D."/>
            <person name="Wan K.H."/>
            <person name="Doyle C."/>
            <person name="Baxter E.G."/>
            <person name="Helt G."/>
            <person name="Nelson C.R."/>
            <person name="Miklos G.L.G."/>
            <person name="Abril J.F."/>
            <person name="Agbayani A."/>
            <person name="An H.-J."/>
            <person name="Andrews-Pfannkoch C."/>
            <person name="Baldwin D."/>
            <person name="Ballew R.M."/>
            <person name="Basu A."/>
            <person name="Baxendale J."/>
            <person name="Bayraktaroglu L."/>
            <person name="Beasley E.M."/>
            <person name="Beeson K.Y."/>
            <person name="Benos P.V."/>
            <person name="Berman B.P."/>
            <person name="Bhandari D."/>
            <person name="Bolshakov S."/>
            <person name="Borkova D."/>
            <person name="Botchan M.R."/>
            <person name="Bouck J."/>
            <person name="Brokstein P."/>
            <person name="Brottier P."/>
            <person name="Burtis K.C."/>
            <person name="Busam D.A."/>
            <person name="Butler H."/>
            <person name="Cadieu E."/>
            <person name="Center A."/>
            <person name="Chandra I."/>
            <person name="Cherry J.M."/>
            <person name="Cawley S."/>
            <person name="Dahlke C."/>
            <person name="Davenport L.B."/>
            <person name="Davies P."/>
            <person name="de Pablos B."/>
            <person name="Delcher A."/>
            <person name="Deng Z."/>
            <person name="Mays A.D."/>
            <person name="Dew I."/>
            <person name="Dietz S.M."/>
            <person name="Dodson K."/>
            <person name="Doup L.E."/>
            <person name="Downes M."/>
            <person name="Dugan-Rocha S."/>
            <person name="Dunkov B.C."/>
            <person name="Dunn P."/>
            <person name="Durbin K.J."/>
            <person name="Evangelista C.C."/>
            <person name="Ferraz C."/>
            <person name="Ferriera S."/>
            <person name="Fleischmann W."/>
            <person name="Fosler C."/>
            <person name="Gabrielian A.E."/>
            <person name="Garg N.S."/>
            <person name="Gelbart W.M."/>
            <person name="Glasser K."/>
            <person name="Glodek A."/>
            <person name="Gong F."/>
            <person name="Gorrell J.H."/>
            <person name="Gu Z."/>
            <person name="Guan P."/>
            <person name="Harris M."/>
            <person name="Harris N.L."/>
            <person name="Harvey D.A."/>
            <person name="Heiman T.J."/>
            <person name="Hernandez J.R."/>
            <person name="Houck J."/>
            <person name="Hostin D."/>
            <person name="Houston K.A."/>
            <person name="Howland T.J."/>
            <person name="Wei M.-H."/>
            <person name="Ibegwam C."/>
            <person name="Jalali M."/>
            <person name="Kalush F."/>
            <person name="Karpen G.H."/>
            <person name="Ke Z."/>
            <person name="Kennison J.A."/>
            <person name="Ketchum K.A."/>
            <person name="Kimmel B.E."/>
            <person name="Kodira C.D."/>
            <person name="Kraft C.L."/>
            <person name="Kravitz S."/>
            <person name="Kulp D."/>
            <person name="Lai Z."/>
            <person name="Lasko P."/>
            <person name="Lei Y."/>
            <person name="Levitsky A.A."/>
            <person name="Li J.H."/>
            <person name="Li Z."/>
            <person name="Liang Y."/>
            <person name="Lin X."/>
            <person name="Liu X."/>
            <person name="Mattei B."/>
            <person name="McIntosh T.C."/>
            <person name="McLeod M.P."/>
            <person name="McPherson D."/>
            <person name="Merkulov G."/>
            <person name="Milshina N.V."/>
            <person name="Mobarry C."/>
            <person name="Morris J."/>
            <person name="Moshrefi A."/>
            <person name="Mount S.M."/>
            <person name="Moy M."/>
            <person name="Murphy B."/>
            <person name="Murphy L."/>
            <person name="Muzny D.M."/>
            <person name="Nelson D.L."/>
            <person name="Nelson D.R."/>
            <person name="Nelson K.A."/>
            <person name="Nixon K."/>
            <person name="Nusskern D.R."/>
            <person name="Pacleb J.M."/>
            <person name="Palazzolo M."/>
            <person name="Pittman G.S."/>
            <person name="Pan S."/>
            <person name="Pollard J."/>
            <person name="Puri V."/>
            <person name="Reese M.G."/>
            <person name="Reinert K."/>
            <person name="Remington K."/>
            <person name="Saunders R.D.C."/>
            <person name="Scheeler F."/>
            <person name="Shen H."/>
            <person name="Shue B.C."/>
            <person name="Siden-Kiamos I."/>
            <person name="Simpson M."/>
            <person name="Skupski M.P."/>
            <person name="Smith T.J."/>
            <person name="Spier E."/>
            <person name="Spradling A.C."/>
            <person name="Stapleton M."/>
            <person name="Strong R."/>
            <person name="Sun E."/>
            <person name="Svirskas R."/>
            <person name="Tector C."/>
            <person name="Turner R."/>
            <person name="Venter E."/>
            <person name="Wang A.H."/>
            <person name="Wang X."/>
            <person name="Wang Z.-Y."/>
            <person name="Wassarman D.A."/>
            <person name="Weinstock G.M."/>
            <person name="Weissenbach J."/>
            <person name="Williams S.M."/>
            <person name="Woodage T."/>
            <person name="Worley K.C."/>
            <person name="Wu D."/>
            <person name="Yang S."/>
            <person name="Yao Q.A."/>
            <person name="Ye J."/>
            <person name="Yeh R.-F."/>
            <person name="Zaveri J.S."/>
            <person name="Zhan M."/>
            <person name="Zhang G."/>
            <person name="Zhao Q."/>
            <person name="Zheng L."/>
            <person name="Zheng X.H."/>
            <person name="Zhong F.N."/>
            <person name="Zhong W."/>
            <person name="Zhou X."/>
            <person name="Zhu S.C."/>
            <person name="Zhu X."/>
            <person name="Smith H.O."/>
            <person name="Gibbs R.A."/>
            <person name="Myers E.W."/>
            <person name="Rubin G.M."/>
            <person name="Venter J.C."/>
        </authorList>
    </citation>
    <scope>NUCLEOTIDE SEQUENCE [LARGE SCALE GENOMIC DNA]</scope>
    <source>
        <strain>Berkeley</strain>
    </source>
</reference>
<reference key="2">
    <citation type="journal article" date="2002" name="Genome Biol.">
        <title>Annotation of the Drosophila melanogaster euchromatic genome: a systematic review.</title>
        <authorList>
            <person name="Misra S."/>
            <person name="Crosby M.A."/>
            <person name="Mungall C.J."/>
            <person name="Matthews B.B."/>
            <person name="Campbell K.S."/>
            <person name="Hradecky P."/>
            <person name="Huang Y."/>
            <person name="Kaminker J.S."/>
            <person name="Millburn G.H."/>
            <person name="Prochnik S.E."/>
            <person name="Smith C.D."/>
            <person name="Tupy J.L."/>
            <person name="Whitfield E.J."/>
            <person name="Bayraktaroglu L."/>
            <person name="Berman B.P."/>
            <person name="Bettencourt B.R."/>
            <person name="Celniker S.E."/>
            <person name="de Grey A.D.N.J."/>
            <person name="Drysdale R.A."/>
            <person name="Harris N.L."/>
            <person name="Richter J."/>
            <person name="Russo S."/>
            <person name="Schroeder A.J."/>
            <person name="Shu S.Q."/>
            <person name="Stapleton M."/>
            <person name="Yamada C."/>
            <person name="Ashburner M."/>
            <person name="Gelbart W.M."/>
            <person name="Rubin G.M."/>
            <person name="Lewis S.E."/>
        </authorList>
    </citation>
    <scope>GENOME REANNOTATION</scope>
    <source>
        <strain>Berkeley</strain>
    </source>
</reference>
<reference key="3">
    <citation type="journal article" date="2002" name="Genome Biol.">
        <title>A Drosophila full-length cDNA resource.</title>
        <authorList>
            <person name="Stapleton M."/>
            <person name="Carlson J.W."/>
            <person name="Brokstein P."/>
            <person name="Yu C."/>
            <person name="Champe M."/>
            <person name="George R.A."/>
            <person name="Guarin H."/>
            <person name="Kronmiller B."/>
            <person name="Pacleb J.M."/>
            <person name="Park S."/>
            <person name="Wan K.H."/>
            <person name="Rubin G.M."/>
            <person name="Celniker S.E."/>
        </authorList>
    </citation>
    <scope>NUCLEOTIDE SEQUENCE [LARGE SCALE MRNA]</scope>
    <source>
        <strain>Berkeley</strain>
        <tissue>Head</tissue>
    </source>
</reference>
<reference key="4">
    <citation type="journal article" date="2018" name="Brain">
        <title>GDAP2 mutations implicate susceptibility to cellular stress in a new form of cerebellar ataxia.</title>
        <authorList>
            <person name="Eidhof I."/>
            <person name="Baets J."/>
            <person name="Kamsteeg E.J."/>
            <person name="Deconinck T."/>
            <person name="van Ninhuijs L."/>
            <person name="Martin J.J."/>
            <person name="Schuele R."/>
            <person name="Zuechner S."/>
            <person name="De Jonghe P."/>
            <person name="Schenck A."/>
            <person name="van de Warrenburg B.P."/>
        </authorList>
    </citation>
    <scope>DISRUPTION PHENOTYPE</scope>
</reference>
<comment type="disruption phenotype">
    <text evidence="3">Shortened lifespan, impaired locomotor behavior, and increased sensitivity to deleterious effects of stressors such as reactive oxygen species and nutrient deprivation. Locomotor anomalies include righting defects, reduced and uncoordinated walking behavior, and compromised flight.</text>
</comment>
<comment type="similarity">
    <text evidence="5">Belongs to the GDAP2 family.</text>
</comment>
<protein>
    <recommendedName>
        <fullName evidence="4">Protein GDAP2 homolog</fullName>
    </recommendedName>
</protein>
<keyword id="KW-1185">Reference proteome</keyword>
<feature type="chain" id="PRO_0000331401" description="Protein GDAP2 homolog">
    <location>
        <begin position="1"/>
        <end position="540"/>
    </location>
</feature>
<feature type="domain" description="Macro" evidence="2">
    <location>
        <begin position="56"/>
        <end position="235"/>
    </location>
</feature>
<feature type="domain" description="CRAL-TRIO" evidence="1">
    <location>
        <begin position="371"/>
        <end position="528"/>
    </location>
</feature>